<comment type="function">
    <text evidence="1">Involved in the biosynthesis of isoprenoids. Catalyzes the 1,3-allylic rearrangement of the homoallylic substrate isopentenyl (IPP) to its allylic isomer, dimethylallyl diphosphate (DMAPP).</text>
</comment>
<comment type="catalytic activity">
    <reaction evidence="1">
        <text>isopentenyl diphosphate = dimethylallyl diphosphate</text>
        <dbReference type="Rhea" id="RHEA:23284"/>
        <dbReference type="ChEBI" id="CHEBI:57623"/>
        <dbReference type="ChEBI" id="CHEBI:128769"/>
        <dbReference type="EC" id="5.3.3.2"/>
    </reaction>
</comment>
<comment type="cofactor">
    <cofactor evidence="1">
        <name>FMN</name>
        <dbReference type="ChEBI" id="CHEBI:58210"/>
    </cofactor>
</comment>
<comment type="cofactor">
    <cofactor evidence="1">
        <name>NADPH</name>
        <dbReference type="ChEBI" id="CHEBI:57783"/>
    </cofactor>
</comment>
<comment type="cofactor">
    <cofactor evidence="1">
        <name>Mg(2+)</name>
        <dbReference type="ChEBI" id="CHEBI:18420"/>
    </cofactor>
</comment>
<comment type="subunit">
    <text evidence="1">Homooctamer. Dimer of tetramers.</text>
</comment>
<comment type="subcellular location">
    <subcellularLocation>
        <location evidence="1">Cytoplasm</location>
    </subcellularLocation>
</comment>
<comment type="similarity">
    <text evidence="1">Belongs to the IPP isomerase type 2 family.</text>
</comment>
<sequence>MPDIVNRKVEHVEIAAFENVDGLSSSTFLNDVILVHQGFPGISFSEINTKTKFFRKEISVPIMVTGMTGGRNELGRINKIIAEVTEKFGIPMGVGSQRVAIEKAEARESFAIVRKVAPTIPIIANLGMPQLVKGYGLKEFQDAIQMIEADAIAVHLNPAQEVFQPEGEPEYQIYALEKLRDISKELSVPIIVKESGNGISMETAKLLYSYGIKNFDTSGQGGTNWIAIEMIRDIRRGNWKAESAKNFLDWGVPTAASIMEVRYSVPDSFLVGSGGIRSGLDAAKAIALGADIAGMALPVLKSAIEGKESLEQFFRKIIFELKAAMMLTGSKDVNALKKTSIVILGKLKEWAEYRGINLSTYDKVRKRE</sequence>
<reference key="1">
    <citation type="journal article" date="2009" name="Proc. Natl. Acad. Sci. U.S.A.">
        <title>Biogeography of the Sulfolobus islandicus pan-genome.</title>
        <authorList>
            <person name="Reno M.L."/>
            <person name="Held N.L."/>
            <person name="Fields C.J."/>
            <person name="Burke P.V."/>
            <person name="Whitaker R.J."/>
        </authorList>
    </citation>
    <scope>NUCLEOTIDE SEQUENCE [LARGE SCALE GENOMIC DNA]</scope>
    <source>
        <strain>L.S.2.15 / Lassen #1</strain>
    </source>
</reference>
<protein>
    <recommendedName>
        <fullName evidence="1">Isopentenyl-diphosphate delta-isomerase</fullName>
        <shortName evidence="1">IPP isomerase</shortName>
        <ecNumber evidence="1">5.3.3.2</ecNumber>
    </recommendedName>
    <alternativeName>
        <fullName evidence="1">Isopentenyl diphosphate:dimethylallyl diphosphate isomerase</fullName>
    </alternativeName>
    <alternativeName>
        <fullName evidence="1">Isopentenyl pyrophosphate isomerase</fullName>
    </alternativeName>
    <alternativeName>
        <fullName evidence="1">Type 2 isopentenyl diphosphate isomerase</fullName>
        <shortName evidence="1">IDI-2</shortName>
    </alternativeName>
</protein>
<name>IDI2_SACI2</name>
<gene>
    <name evidence="1" type="primary">fni</name>
    <name type="ordered locus">LS215_2222</name>
</gene>
<evidence type="ECO:0000255" key="1">
    <source>
        <dbReference type="HAMAP-Rule" id="MF_00354"/>
    </source>
</evidence>
<dbReference type="EC" id="5.3.3.2" evidence="1"/>
<dbReference type="EMBL" id="CP001399">
    <property type="protein sequence ID" value="ACP36209.1"/>
    <property type="molecule type" value="Genomic_DNA"/>
</dbReference>
<dbReference type="RefSeq" id="WP_012712024.1">
    <property type="nucleotide sequence ID" value="NC_012589.1"/>
</dbReference>
<dbReference type="SMR" id="C3MJQ6"/>
<dbReference type="GeneID" id="84062367"/>
<dbReference type="KEGG" id="sis:LS215_2222"/>
<dbReference type="HOGENOM" id="CLU_065515_1_0_2"/>
<dbReference type="OrthoDB" id="371955at2157"/>
<dbReference type="Proteomes" id="UP000001747">
    <property type="component" value="Chromosome"/>
</dbReference>
<dbReference type="GO" id="GO:0005737">
    <property type="term" value="C:cytoplasm"/>
    <property type="evidence" value="ECO:0007669"/>
    <property type="project" value="UniProtKB-SubCell"/>
</dbReference>
<dbReference type="GO" id="GO:0010181">
    <property type="term" value="F:FMN binding"/>
    <property type="evidence" value="ECO:0007669"/>
    <property type="project" value="UniProtKB-UniRule"/>
</dbReference>
<dbReference type="GO" id="GO:0004452">
    <property type="term" value="F:isopentenyl-diphosphate delta-isomerase activity"/>
    <property type="evidence" value="ECO:0007669"/>
    <property type="project" value="UniProtKB-UniRule"/>
</dbReference>
<dbReference type="GO" id="GO:0000287">
    <property type="term" value="F:magnesium ion binding"/>
    <property type="evidence" value="ECO:0007669"/>
    <property type="project" value="UniProtKB-UniRule"/>
</dbReference>
<dbReference type="GO" id="GO:0070402">
    <property type="term" value="F:NADPH binding"/>
    <property type="evidence" value="ECO:0007669"/>
    <property type="project" value="UniProtKB-UniRule"/>
</dbReference>
<dbReference type="GO" id="GO:0016491">
    <property type="term" value="F:oxidoreductase activity"/>
    <property type="evidence" value="ECO:0007669"/>
    <property type="project" value="InterPro"/>
</dbReference>
<dbReference type="GO" id="GO:0008299">
    <property type="term" value="P:isoprenoid biosynthetic process"/>
    <property type="evidence" value="ECO:0007669"/>
    <property type="project" value="UniProtKB-UniRule"/>
</dbReference>
<dbReference type="CDD" id="cd02811">
    <property type="entry name" value="IDI-2_FMN"/>
    <property type="match status" value="1"/>
</dbReference>
<dbReference type="FunFam" id="3.20.20.70:FF:000258">
    <property type="entry name" value="Isopentenyl-diphosphate delta-isomerase"/>
    <property type="match status" value="1"/>
</dbReference>
<dbReference type="Gene3D" id="3.20.20.70">
    <property type="entry name" value="Aldolase class I"/>
    <property type="match status" value="1"/>
</dbReference>
<dbReference type="HAMAP" id="MF_00354">
    <property type="entry name" value="Idi_2"/>
    <property type="match status" value="1"/>
</dbReference>
<dbReference type="InterPro" id="IPR013785">
    <property type="entry name" value="Aldolase_TIM"/>
</dbReference>
<dbReference type="InterPro" id="IPR000262">
    <property type="entry name" value="FMN-dep_DH"/>
</dbReference>
<dbReference type="InterPro" id="IPR011179">
    <property type="entry name" value="IPdP_isomerase"/>
</dbReference>
<dbReference type="NCBIfam" id="TIGR02151">
    <property type="entry name" value="IPP_isom_2"/>
    <property type="match status" value="1"/>
</dbReference>
<dbReference type="PANTHER" id="PTHR43665">
    <property type="entry name" value="ISOPENTENYL-DIPHOSPHATE DELTA-ISOMERASE"/>
    <property type="match status" value="1"/>
</dbReference>
<dbReference type="PANTHER" id="PTHR43665:SF1">
    <property type="entry name" value="ISOPENTENYL-DIPHOSPHATE DELTA-ISOMERASE"/>
    <property type="match status" value="1"/>
</dbReference>
<dbReference type="Pfam" id="PF01070">
    <property type="entry name" value="FMN_dh"/>
    <property type="match status" value="1"/>
</dbReference>
<dbReference type="PIRSF" id="PIRSF003314">
    <property type="entry name" value="IPP_isomerase"/>
    <property type="match status" value="1"/>
</dbReference>
<dbReference type="SMART" id="SM01240">
    <property type="entry name" value="IMPDH"/>
    <property type="match status" value="1"/>
</dbReference>
<dbReference type="SUPFAM" id="SSF51395">
    <property type="entry name" value="FMN-linked oxidoreductases"/>
    <property type="match status" value="1"/>
</dbReference>
<accession>C3MJQ6</accession>
<keyword id="KW-0963">Cytoplasm</keyword>
<keyword id="KW-0285">Flavoprotein</keyword>
<keyword id="KW-0288">FMN</keyword>
<keyword id="KW-0413">Isomerase</keyword>
<keyword id="KW-0414">Isoprene biosynthesis</keyword>
<keyword id="KW-0460">Magnesium</keyword>
<keyword id="KW-0479">Metal-binding</keyword>
<keyword id="KW-0521">NADP</keyword>
<organism>
    <name type="scientific">Saccharolobus islandicus (strain L.S.2.15 / Lassen #1)</name>
    <name type="common">Sulfolobus islandicus</name>
    <dbReference type="NCBI Taxonomy" id="429572"/>
    <lineage>
        <taxon>Archaea</taxon>
        <taxon>Thermoproteota</taxon>
        <taxon>Thermoprotei</taxon>
        <taxon>Sulfolobales</taxon>
        <taxon>Sulfolobaceae</taxon>
        <taxon>Saccharolobus</taxon>
    </lineage>
</organism>
<feature type="chain" id="PRO_1000205355" description="Isopentenyl-diphosphate delta-isomerase">
    <location>
        <begin position="1"/>
        <end position="368"/>
    </location>
</feature>
<feature type="binding site" evidence="1">
    <location>
        <begin position="7"/>
        <end position="8"/>
    </location>
    <ligand>
        <name>substrate</name>
    </ligand>
</feature>
<feature type="binding site" evidence="1">
    <location>
        <position position="65"/>
    </location>
    <ligand>
        <name>FMN</name>
        <dbReference type="ChEBI" id="CHEBI:58210"/>
    </ligand>
</feature>
<feature type="binding site" evidence="1">
    <location>
        <begin position="66"/>
        <end position="68"/>
    </location>
    <ligand>
        <name>FMN</name>
        <dbReference type="ChEBI" id="CHEBI:58210"/>
    </ligand>
</feature>
<feature type="binding site" evidence="1">
    <location>
        <begin position="96"/>
        <end position="98"/>
    </location>
    <ligand>
        <name>substrate</name>
    </ligand>
</feature>
<feature type="binding site" evidence="1">
    <location>
        <position position="96"/>
    </location>
    <ligand>
        <name>FMN</name>
        <dbReference type="ChEBI" id="CHEBI:58210"/>
    </ligand>
</feature>
<feature type="binding site" evidence="1">
    <location>
        <position position="125"/>
    </location>
    <ligand>
        <name>FMN</name>
        <dbReference type="ChEBI" id="CHEBI:58210"/>
    </ligand>
</feature>
<feature type="binding site" evidence="1">
    <location>
        <position position="160"/>
    </location>
    <ligand>
        <name>substrate</name>
    </ligand>
</feature>
<feature type="binding site" evidence="1">
    <location>
        <position position="161"/>
    </location>
    <ligand>
        <name>Mg(2+)</name>
        <dbReference type="ChEBI" id="CHEBI:18420"/>
    </ligand>
</feature>
<feature type="binding site" evidence="1">
    <location>
        <position position="193"/>
    </location>
    <ligand>
        <name>FMN</name>
        <dbReference type="ChEBI" id="CHEBI:58210"/>
    </ligand>
</feature>
<feature type="binding site" evidence="1">
    <location>
        <position position="218"/>
    </location>
    <ligand>
        <name>FMN</name>
        <dbReference type="ChEBI" id="CHEBI:58210"/>
    </ligand>
</feature>
<feature type="binding site" evidence="1">
    <location>
        <position position="223"/>
    </location>
    <ligand>
        <name>FMN</name>
        <dbReference type="ChEBI" id="CHEBI:58210"/>
    </ligand>
</feature>
<feature type="binding site" evidence="1">
    <location>
        <begin position="275"/>
        <end position="277"/>
    </location>
    <ligand>
        <name>FMN</name>
        <dbReference type="ChEBI" id="CHEBI:58210"/>
    </ligand>
</feature>
<feature type="binding site" evidence="1">
    <location>
        <begin position="296"/>
        <end position="297"/>
    </location>
    <ligand>
        <name>FMN</name>
        <dbReference type="ChEBI" id="CHEBI:58210"/>
    </ligand>
</feature>
<proteinExistence type="inferred from homology"/>